<proteinExistence type="evidence at transcript level"/>
<organismHost>
    <name type="scientific">Aves</name>
    <dbReference type="NCBI Taxonomy" id="8782"/>
</organismHost>
<organismHost>
    <name type="scientific">Homo sapiens</name>
    <name type="common">Human</name>
    <dbReference type="NCBI Taxonomy" id="9606"/>
</organismHost>
<organismHost>
    <name type="scientific">Sus scrofa</name>
    <name type="common">Pig</name>
    <dbReference type="NCBI Taxonomy" id="9823"/>
</organismHost>
<reference key="1">
    <citation type="journal article" date="1998" name="J. Virol.">
        <title>Molecular basis for the generation in pigs of influenza A viruses with pandemic potential.</title>
        <authorList>
            <person name="Ito T."/>
            <person name="Couceiro J.N."/>
            <person name="Kelm S."/>
            <person name="Baum L.G."/>
            <person name="Krauss S."/>
            <person name="Castrucci M.R."/>
            <person name="Donatelli I."/>
            <person name="Kida H."/>
            <person name="Paulson J.C."/>
            <person name="Webster R.G."/>
            <person name="Kawaoka Y."/>
        </authorList>
    </citation>
    <scope>NUCLEOTIDE SEQUENCE [MRNA]</scope>
</reference>
<reference key="2">
    <citation type="journal article" date="1996" name="J. Virol.">
        <title>Emergence of avian H1N1 influenza viruses in pigs in China.</title>
        <authorList>
            <person name="Guan Y."/>
            <person name="Shortridge K.F."/>
            <person name="Krauss S."/>
            <person name="Li P.H."/>
            <person name="Kawaoka Y."/>
            <person name="Webster R.G."/>
        </authorList>
    </citation>
    <scope>NUCLEOTIDE SEQUENCE [MRNA] OF 18-344</scope>
</reference>
<sequence length="566" mass="63009">MEAKLLVLFCTFAALKADTICIGYHANNSTDTVDTVLEKNVTVTHSVNLLENSHNGKLCSLNGIAPLQLGKCNVAGWLLGNLECDLLLTANSWSYIIETSNSENGTCYPGEFIDYEELREQLSSVSSFEKFEIFPKASSWPNHETTKGVTAACSYLGASSFYRNLLWMTKKGTSYPKLSKSYTNNKGKEVLVLWGVHHPPTTSEQQTLYQNVDAYVSVGSSKYNRRFTPEIAARPKVRGQAGKMNYYWTLLDQGDTITFEATGNLIAPWYAFALNKGSDSGIITSDAPVHNCDTKCQTPYGALNSSLPFQNVHPITIGECPKYVKSTKLRMATGLRNVPSIQSRGLFGAIAGFIEGGWTGMIDGWYGYHHQNEQGSGYAADQKSTQSAIDGITNKVNSVIEKMNTQFTAVGKEFNNLERRIENLNKKVDDGFLDVWTYNAELLVLLENERTLDFHDSNVRNLYEKVKSQLRNNAKEIGNGCFEFYHKCDDECMESVKNGTYDYPKYSEESKLNREEIDGVKLESMGVYQILAIYSTVASSLVLLVSLGAVSFWMCSNGSLQCRICI</sequence>
<organism>
    <name type="scientific">Influenza A virus (strain A/Duck/Australia/749/1980 H1N1)</name>
    <dbReference type="NCBI Taxonomy" id="383547"/>
    <lineage>
        <taxon>Viruses</taxon>
        <taxon>Riboviria</taxon>
        <taxon>Orthornavirae</taxon>
        <taxon>Negarnaviricota</taxon>
        <taxon>Polyploviricotina</taxon>
        <taxon>Insthoviricetes</taxon>
        <taxon>Articulavirales</taxon>
        <taxon>Orthomyxoviridae</taxon>
        <taxon>Alphainfluenzavirus</taxon>
        <taxon>Alphainfluenzavirus influenzae</taxon>
        <taxon>Influenza A virus</taxon>
    </lineage>
</organism>
<name>HEMA_I80A1</name>
<dbReference type="EMBL" id="AF091312">
    <property type="protein sequence ID" value="AAD25307.1"/>
    <property type="molecule type" value="mRNA"/>
</dbReference>
<dbReference type="EMBL" id="U47309">
    <property type="protein sequence ID" value="AAB52909.1"/>
    <property type="molecule type" value="mRNA"/>
</dbReference>
<dbReference type="SMR" id="Q9WCE3"/>
<dbReference type="GlyCosmos" id="Q9WCE3">
    <property type="glycosylation" value="6 sites, No reported glycans"/>
</dbReference>
<dbReference type="GO" id="GO:0020002">
    <property type="term" value="C:host cell plasma membrane"/>
    <property type="evidence" value="ECO:0007669"/>
    <property type="project" value="UniProtKB-SubCell"/>
</dbReference>
<dbReference type="GO" id="GO:0016020">
    <property type="term" value="C:membrane"/>
    <property type="evidence" value="ECO:0007669"/>
    <property type="project" value="UniProtKB-UniRule"/>
</dbReference>
<dbReference type="GO" id="GO:0019031">
    <property type="term" value="C:viral envelope"/>
    <property type="evidence" value="ECO:0007669"/>
    <property type="project" value="UniProtKB-UniRule"/>
</dbReference>
<dbReference type="GO" id="GO:0055036">
    <property type="term" value="C:virion membrane"/>
    <property type="evidence" value="ECO:0007669"/>
    <property type="project" value="UniProtKB-SubCell"/>
</dbReference>
<dbReference type="GO" id="GO:0046789">
    <property type="term" value="F:host cell surface receptor binding"/>
    <property type="evidence" value="ECO:0007669"/>
    <property type="project" value="UniProtKB-UniRule"/>
</dbReference>
<dbReference type="GO" id="GO:0075512">
    <property type="term" value="P:clathrin-dependent endocytosis of virus by host cell"/>
    <property type="evidence" value="ECO:0007669"/>
    <property type="project" value="UniProtKB-UniRule"/>
</dbReference>
<dbReference type="GO" id="GO:0039654">
    <property type="term" value="P:fusion of virus membrane with host endosome membrane"/>
    <property type="evidence" value="ECO:0007669"/>
    <property type="project" value="UniProtKB-UniRule"/>
</dbReference>
<dbReference type="GO" id="GO:0019064">
    <property type="term" value="P:fusion of virus membrane with host plasma membrane"/>
    <property type="evidence" value="ECO:0007669"/>
    <property type="project" value="InterPro"/>
</dbReference>
<dbReference type="GO" id="GO:0046761">
    <property type="term" value="P:viral budding from plasma membrane"/>
    <property type="evidence" value="ECO:0007669"/>
    <property type="project" value="UniProtKB-UniRule"/>
</dbReference>
<dbReference type="GO" id="GO:0019062">
    <property type="term" value="P:virion attachment to host cell"/>
    <property type="evidence" value="ECO:0007669"/>
    <property type="project" value="UniProtKB-KW"/>
</dbReference>
<dbReference type="FunFam" id="3.90.20.10:FF:000002">
    <property type="entry name" value="Hemagglutinin"/>
    <property type="match status" value="1"/>
</dbReference>
<dbReference type="Gene3D" id="3.90.20.10">
    <property type="match status" value="1"/>
</dbReference>
<dbReference type="Gene3D" id="3.90.209.20">
    <property type="match status" value="1"/>
</dbReference>
<dbReference type="Gene3D" id="2.10.77.10">
    <property type="entry name" value="Hemagglutinin Chain A, Domain 2"/>
    <property type="match status" value="1"/>
</dbReference>
<dbReference type="HAMAP" id="MF_04072">
    <property type="entry name" value="INFV_HEMA"/>
    <property type="match status" value="1"/>
</dbReference>
<dbReference type="InterPro" id="IPR008980">
    <property type="entry name" value="Capsid_hemagglutn"/>
</dbReference>
<dbReference type="InterPro" id="IPR013828">
    <property type="entry name" value="Hemagglutn_HA1_a/b_dom_sf"/>
</dbReference>
<dbReference type="InterPro" id="IPR000149">
    <property type="entry name" value="Hemagglutn_influenz_A"/>
</dbReference>
<dbReference type="InterPro" id="IPR001364">
    <property type="entry name" value="Hemagglutn_influenz_A/B"/>
</dbReference>
<dbReference type="Pfam" id="PF00509">
    <property type="entry name" value="Hemagglutinin"/>
    <property type="match status" value="1"/>
</dbReference>
<dbReference type="PRINTS" id="PR00330">
    <property type="entry name" value="HEMAGGLUTN1"/>
</dbReference>
<dbReference type="PRINTS" id="PR00329">
    <property type="entry name" value="HEMAGGLUTN12"/>
</dbReference>
<dbReference type="SUPFAM" id="SSF58064">
    <property type="entry name" value="Influenza hemagglutinin (stalk)"/>
    <property type="match status" value="1"/>
</dbReference>
<dbReference type="SUPFAM" id="SSF49818">
    <property type="entry name" value="Viral protein domain"/>
    <property type="match status" value="1"/>
</dbReference>
<comment type="function">
    <text evidence="2">Binds to sialic acid-containing receptors on the cell surface, bringing about the attachment of the virus particle to the cell. This attachment induces virion internalization either through clathrin-dependent endocytosis or through clathrin- and caveolin-independent pathway. Plays a major role in the determination of host range restriction and virulence. Class I viral fusion protein. Responsible for penetration of the virus into the cell cytoplasm by mediating the fusion of the membrane of the endocytosed virus particle with the endosomal membrane. Low pH in endosomes induces an irreversible conformational change in HA2, releasing the fusion hydrophobic peptide. Several trimers are required to form a competent fusion pore.</text>
</comment>
<comment type="subunit">
    <text evidence="1">Homotrimer of disulfide-linked HA1-HA2. Interacts with human CACNA1C.</text>
</comment>
<comment type="subcellular location">
    <subcellularLocation>
        <location evidence="2">Virion membrane</location>
        <topology evidence="2">Single-pass type I membrane protein</topology>
    </subcellularLocation>
    <subcellularLocation>
        <location evidence="2">Host apical cell membrane</location>
        <topology evidence="2">Single-pass type I membrane protein</topology>
    </subcellularLocation>
    <text evidence="2">Targeted to the apical plasma membrane in epithelial polarized cells through a signal present in the transmembrane domain. Associated with glycosphingolipid- and cholesterol-enriched detergent-resistant lipid rafts.</text>
</comment>
<comment type="PTM">
    <text evidence="2">Palmitoylated.</text>
</comment>
<comment type="PTM">
    <text evidence="2">In natural infection, inactive HA is matured into HA1 and HA2 outside the cell by one or more trypsin-like, arginine-specific endoprotease secreted by the bronchial epithelial cells. One identified protease that may be involved in this process is secreted in lungs by club cells.</text>
</comment>
<comment type="miscellaneous">
    <text>Major glycoprotein, comprises over 80% of the envelope proteins present in virus particle.</text>
</comment>
<comment type="miscellaneous">
    <text>The extent of infection into host organism is determined by HA. Influenza viruses bud from the apical surface of polarized epithelial cells (e.g. bronchial epithelial cells) into lumen of lungs and are therefore usually pneumotropic. The reason is that HA is cleaved by tryptase clara which is restricted to lungs. However, HAs of H5 and H7 pantropic avian viruses subtypes can be cleaved by furin and subtilisin-type enzymes, allowing the virus to grow in other organs than lungs.</text>
</comment>
<comment type="miscellaneous">
    <text evidence="3">The influenza A genome consist of 8 RNA segments. Genetic variation of hemagglutinin and/or neuraminidase genes results in the emergence of new influenza strains. The mechanism of variation can be the result of point mutations or the result of genetic reassortment between segments of two different strains.</text>
</comment>
<comment type="similarity">
    <text evidence="2">Belongs to the influenza viruses hemagglutinin family.</text>
</comment>
<accession>Q9WCE3</accession>
<accession>O09651</accession>
<protein>
    <recommendedName>
        <fullName evidence="2">Hemagglutinin</fullName>
    </recommendedName>
    <component>
        <recommendedName>
            <fullName evidence="2">Hemagglutinin HA1 chain</fullName>
        </recommendedName>
    </component>
    <component>
        <recommendedName>
            <fullName evidence="2">Hemagglutinin HA2 chain</fullName>
        </recommendedName>
    </component>
</protein>
<feature type="signal peptide" evidence="2">
    <location>
        <begin position="1"/>
        <end position="17"/>
    </location>
</feature>
<feature type="chain" id="PRO_0000440482" description="Hemagglutinin" evidence="2">
    <location>
        <begin position="18"/>
        <end position="566"/>
    </location>
</feature>
<feature type="chain" id="PRO_5000055165" description="Hemagglutinin HA1 chain" evidence="2">
    <location>
        <begin position="18"/>
        <end position="343"/>
    </location>
</feature>
<feature type="chain" id="PRO_5000055166" description="Hemagglutinin HA2 chain" evidence="2">
    <location>
        <begin position="345"/>
        <end position="566"/>
    </location>
</feature>
<feature type="topological domain" description="Extracellular" evidence="2">
    <location>
        <begin position="18"/>
        <end position="529"/>
    </location>
</feature>
<feature type="transmembrane region" description="Helical" evidence="2">
    <location>
        <begin position="530"/>
        <end position="550"/>
    </location>
</feature>
<feature type="topological domain" description="Cytoplasmic" evidence="2">
    <location>
        <begin position="551"/>
        <end position="566"/>
    </location>
</feature>
<feature type="site" description="Cleavage; by host" evidence="2">
    <location>
        <begin position="344"/>
        <end position="345"/>
    </location>
</feature>
<feature type="lipid moiety-binding region" description="S-palmitoyl cysteine; by host" evidence="2">
    <location>
        <position position="555"/>
    </location>
</feature>
<feature type="lipid moiety-binding region" description="S-palmitoyl cysteine; by host" evidence="2">
    <location>
        <position position="562"/>
    </location>
</feature>
<feature type="lipid moiety-binding region" description="S-palmitoyl cysteine; by host" evidence="2">
    <location>
        <position position="565"/>
    </location>
</feature>
<feature type="glycosylation site" description="N-linked (GlcNAc...) asparagine; by host" evidence="2">
    <location>
        <position position="27"/>
    </location>
</feature>
<feature type="glycosylation site" description="N-linked (GlcNAc...) asparagine; by host" evidence="2">
    <location>
        <position position="28"/>
    </location>
</feature>
<feature type="glycosylation site" description="N-linked (GlcNAc...) asparagine; by host" evidence="2">
    <location>
        <position position="40"/>
    </location>
</feature>
<feature type="glycosylation site" description="N-linked (GlcNAc...) asparagine; by host" evidence="2">
    <location>
        <position position="104"/>
    </location>
</feature>
<feature type="glycosylation site" description="N-linked (GlcNAc...) asparagine; by host" evidence="2">
    <location>
        <position position="304"/>
    </location>
</feature>
<feature type="glycosylation site" description="N-linked (GlcNAc...) asparagine; by host" evidence="2">
    <location>
        <position position="498"/>
    </location>
</feature>
<feature type="disulfide bond" description="Interchain (between HA1 and HA2 chains)" evidence="2">
    <location>
        <begin position="21"/>
        <end position="481"/>
    </location>
</feature>
<feature type="disulfide bond" evidence="2">
    <location>
        <begin position="59"/>
        <end position="292"/>
    </location>
</feature>
<feature type="disulfide bond" evidence="2">
    <location>
        <begin position="72"/>
        <end position="84"/>
    </location>
</feature>
<feature type="disulfide bond" evidence="2">
    <location>
        <begin position="107"/>
        <end position="153"/>
    </location>
</feature>
<feature type="disulfide bond" evidence="2">
    <location>
        <begin position="296"/>
        <end position="320"/>
    </location>
</feature>
<feature type="disulfide bond" evidence="2">
    <location>
        <begin position="488"/>
        <end position="492"/>
    </location>
</feature>
<gene>
    <name evidence="2" type="primary">HA</name>
</gene>
<keyword id="KW-1167">Clathrin- and caveolin-independent endocytosis of virus by host</keyword>
<keyword id="KW-1165">Clathrin-mediated endocytosis of virus by host</keyword>
<keyword id="KW-1015">Disulfide bond</keyword>
<keyword id="KW-1170">Fusion of virus membrane with host endosomal membrane</keyword>
<keyword id="KW-1168">Fusion of virus membrane with host membrane</keyword>
<keyword id="KW-0325">Glycoprotein</keyword>
<keyword id="KW-0348">Hemagglutinin</keyword>
<keyword id="KW-1032">Host cell membrane</keyword>
<keyword id="KW-1043">Host membrane</keyword>
<keyword id="KW-0945">Host-virus interaction</keyword>
<keyword id="KW-0449">Lipoprotein</keyword>
<keyword id="KW-0472">Membrane</keyword>
<keyword id="KW-0564">Palmitate</keyword>
<keyword id="KW-0732">Signal</keyword>
<keyword id="KW-0812">Transmembrane</keyword>
<keyword id="KW-1133">Transmembrane helix</keyword>
<keyword id="KW-1161">Viral attachment to host cell</keyword>
<keyword id="KW-0261">Viral envelope protein</keyword>
<keyword id="KW-1162">Viral penetration into host cytoplasm</keyword>
<keyword id="KW-0946">Virion</keyword>
<keyword id="KW-1164">Virus endocytosis by host</keyword>
<keyword id="KW-1160">Virus entry into host cell</keyword>
<evidence type="ECO:0000250" key="1">
    <source>
        <dbReference type="UniProtKB" id="Q289M7"/>
    </source>
</evidence>
<evidence type="ECO:0000255" key="2">
    <source>
        <dbReference type="HAMAP-Rule" id="MF_04072"/>
    </source>
</evidence>
<evidence type="ECO:0000305" key="3"/>